<protein>
    <recommendedName>
        <fullName evidence="5">Flagellar radial spoke protein 1</fullName>
    </recommendedName>
</protein>
<name>RSP1_CHLRE</name>
<sequence length="814" mass="87786">MALGPFVLPFRGDQYSFGINFKSSPEEKLNFDLSCVAFDVKGQLHDTLHARKPTALDGALVKGFEKQALPEETVQVEGDDVIYMFPKKFERQVEVLLFVASAPSIPGKKHDLDSSSKLEFAVSYSDVGGQAFNQSFDLKPLAAQGGVSSIIVAVMYLQAEGGWTLRSVGDCHPFDSPGLIVPELKQTILNLRDHHGVQLDAADAIQAIDPAERVPVTRQFQDQSLDEASAGRAAEPAPVKKLRIDLSWTFWPPPPPTEEGEEPPEEPALEYNLVMYNKDGEEVQSISTGNREATGARAGRPEPEEDEEEEKEEEKEEPEEGEEGEEGEGGEPKEPPPPPPAPKVDPYEFKERDVIYLDVPDLPAEVRSMVLLVTNYDEENGFTRVRTVRCRLVDVSNGEAPLPGSKAAVAAAAAAAEQGLAAPPNPERVLADYGVLSKYEDDKATTQVALMKLYKEYADSAFNVFRGAGVDNVAAFIGQEPDTIINQLKAYLEATKKQKAAEAAAAAAAEESGEEITADPKPHVWRFRALGLNFGGDSLEAIEHDLKNLFAFDGDLAPGAARDSDTSRSSFPNGDTYFGSYADDVKHGPGLYAFATGAGYAGEYAGGKRHGRGVMVFPDGGTYVGEFVADKFEGQGQYRYPDGSVYTGSWAAGQKHGPGVYWDTARGCLRGEWKKGLLVGKGTYEQPALRFEGEFVRGMPAGTATYTLTGHRTLDMPCFAAQHIQAEEGPTLALPCAYGIPPGSGDEPQLDEEGQPIEDTDKPPLPAHPKYEGLTFTAEQLPGAAPDTVFPPEEGKPVPITAVPAFSVSTGLVA</sequence>
<dbReference type="EMBL" id="DQ298254">
    <property type="protein sequence ID" value="ABC02025.1"/>
    <property type="molecule type" value="mRNA"/>
</dbReference>
<dbReference type="EMBL" id="DS496126">
    <property type="protein sequence ID" value="EDP03379.1"/>
    <property type="molecule type" value="Genomic_DNA"/>
</dbReference>
<dbReference type="RefSeq" id="XP_001693353.1">
    <property type="nucleotide sequence ID" value="XM_001693301.1"/>
</dbReference>
<dbReference type="PDB" id="7JRJ">
    <property type="method" value="EM"/>
    <property type="resolution" value="3.03 A"/>
    <property type="chains" value="F=1-814"/>
</dbReference>
<dbReference type="PDB" id="7JTK">
    <property type="method" value="EM"/>
    <property type="resolution" value="3.20 A"/>
    <property type="chains" value="A/B=1-814"/>
</dbReference>
<dbReference type="PDB" id="8GLV">
    <property type="method" value="EM"/>
    <property type="resolution" value="3.10 A"/>
    <property type="chains" value="HX/Hh/JH/JM=1-814"/>
</dbReference>
<dbReference type="PDBsum" id="7JRJ"/>
<dbReference type="PDBsum" id="7JTK"/>
<dbReference type="PDBsum" id="8GLV"/>
<dbReference type="EMDB" id="EMD-22446"/>
<dbReference type="EMDB" id="EMD-22475"/>
<dbReference type="EMDB" id="EMD-40220"/>
<dbReference type="SMR" id="Q27YU0"/>
<dbReference type="iPTMnet" id="Q27YU0"/>
<dbReference type="PaxDb" id="3055-EDP03379"/>
<dbReference type="ProMEX" id="Q27YU0"/>
<dbReference type="EnsemblPlants" id="PNW85872">
    <property type="protein sequence ID" value="PNW85872"/>
    <property type="gene ID" value="CHLRE_03g201900v5"/>
</dbReference>
<dbReference type="GeneID" id="5718906"/>
<dbReference type="Gramene" id="PNW85872">
    <property type="protein sequence ID" value="PNW85872"/>
    <property type="gene ID" value="CHLRE_03g201900v5"/>
</dbReference>
<dbReference type="KEGG" id="cre:CHLRE_03g201900v5"/>
<dbReference type="eggNOG" id="KOG0231">
    <property type="taxonomic scope" value="Eukaryota"/>
</dbReference>
<dbReference type="HOGENOM" id="CLU_346963_0_0_1"/>
<dbReference type="OMA" id="CAYGIPP"/>
<dbReference type="OrthoDB" id="437960at2759"/>
<dbReference type="GO" id="GO:0005737">
    <property type="term" value="C:cytoplasm"/>
    <property type="evidence" value="ECO:0007669"/>
    <property type="project" value="UniProtKB-KW"/>
</dbReference>
<dbReference type="GO" id="GO:0005856">
    <property type="term" value="C:cytoskeleton"/>
    <property type="evidence" value="ECO:0007669"/>
    <property type="project" value="UniProtKB-KW"/>
</dbReference>
<dbReference type="GO" id="GO:0016020">
    <property type="term" value="C:membrane"/>
    <property type="evidence" value="ECO:0007669"/>
    <property type="project" value="UniProtKB-ARBA"/>
</dbReference>
<dbReference type="GO" id="GO:0031514">
    <property type="term" value="C:motile cilium"/>
    <property type="evidence" value="ECO:0007669"/>
    <property type="project" value="UniProtKB-KW"/>
</dbReference>
<dbReference type="Gene3D" id="2.20.110.10">
    <property type="entry name" value="Histone H3 K4-specific methyltransferase SET7/9 N-terminal domain"/>
    <property type="match status" value="2"/>
</dbReference>
<dbReference type="Gene3D" id="2.60.60.30">
    <property type="entry name" value="sav2460 like domains"/>
    <property type="match status" value="2"/>
</dbReference>
<dbReference type="InterPro" id="IPR003409">
    <property type="entry name" value="MORN"/>
</dbReference>
<dbReference type="PANTHER" id="PTHR43215">
    <property type="entry name" value="RADIAL SPOKE HEAD 1 HOMOLOG"/>
    <property type="match status" value="1"/>
</dbReference>
<dbReference type="PANTHER" id="PTHR43215:SF14">
    <property type="entry name" value="RADIAL SPOKE HEAD 1 HOMOLOG"/>
    <property type="match status" value="1"/>
</dbReference>
<dbReference type="Pfam" id="PF02493">
    <property type="entry name" value="MORN"/>
    <property type="match status" value="6"/>
</dbReference>
<dbReference type="SMART" id="SM00698">
    <property type="entry name" value="MORN"/>
    <property type="match status" value="6"/>
</dbReference>
<dbReference type="SUPFAM" id="SSF82185">
    <property type="entry name" value="Histone H3 K4-specific methyltransferase SET7/9 N-terminal domain"/>
    <property type="match status" value="1"/>
</dbReference>
<comment type="function">
    <text evidence="3">Flagellar radial spokes contribute to the regulation of dynein arm activity and thus the pattern of flagellar bending. They consist of a thin stalk, which is attached to the a subfiber of the outer doublet microtubule, and a bulbous head, which is attached to the stalk and appears to interact with the projections from the central pair of microtubules.</text>
</comment>
<comment type="subcellular location">
    <subcellularLocation>
        <location evidence="3">Cytoplasm</location>
        <location evidence="3">Cytoskeleton</location>
        <location evidence="3">Flagellum axoneme</location>
    </subcellularLocation>
    <text evidence="3">Radial spoke.</text>
</comment>
<comment type="PTM">
    <text evidence="4">Asymmetrically dimethylated at Arg-243 and Arg-428 during flagellum resorption. Probably methylated by PRMT1.</text>
</comment>
<feature type="chain" id="PRO_0000431952" description="Flagellar radial spoke protein 1">
    <location>
        <begin position="1"/>
        <end position="814"/>
    </location>
</feature>
<feature type="repeat" description="MORN 1" evidence="1">
    <location>
        <begin position="577"/>
        <end position="597"/>
    </location>
</feature>
<feature type="repeat" description="MORN 2" evidence="1">
    <location>
        <begin position="600"/>
        <end position="622"/>
    </location>
</feature>
<feature type="repeat" description="MORN 3" evidence="1">
    <location>
        <begin position="623"/>
        <end position="645"/>
    </location>
</feature>
<feature type="repeat" description="MORN 4" evidence="1">
    <location>
        <begin position="646"/>
        <end position="662"/>
    </location>
</feature>
<feature type="repeat" description="MORN 5" evidence="1">
    <location>
        <begin position="671"/>
        <end position="685"/>
    </location>
</feature>
<feature type="repeat" description="MORN 6" evidence="1">
    <location>
        <begin position="691"/>
        <end position="707"/>
    </location>
</feature>
<feature type="region of interest" description="Disordered" evidence="2">
    <location>
        <begin position="283"/>
        <end position="346"/>
    </location>
</feature>
<feature type="region of interest" description="Disordered" evidence="2">
    <location>
        <begin position="739"/>
        <end position="769"/>
    </location>
</feature>
<feature type="compositionally biased region" description="Acidic residues" evidence="2">
    <location>
        <begin position="303"/>
        <end position="329"/>
    </location>
</feature>
<feature type="compositionally biased region" description="Acidic residues" evidence="2">
    <location>
        <begin position="748"/>
        <end position="758"/>
    </location>
</feature>
<feature type="modified residue" description="Asymmetric dimethylarginine" evidence="4">
    <location>
        <position position="243"/>
    </location>
</feature>
<feature type="modified residue" description="Asymmetric dimethylarginine" evidence="4">
    <location>
        <position position="428"/>
    </location>
</feature>
<feature type="strand" evidence="9">
    <location>
        <begin position="15"/>
        <end position="19"/>
    </location>
</feature>
<feature type="strand" evidence="9">
    <location>
        <begin position="32"/>
        <end position="38"/>
    </location>
</feature>
<feature type="strand" evidence="9">
    <location>
        <begin position="43"/>
        <end position="47"/>
    </location>
</feature>
<feature type="turn" evidence="9">
    <location>
        <begin position="56"/>
        <end position="59"/>
    </location>
</feature>
<feature type="strand" evidence="9">
    <location>
        <begin position="60"/>
        <end position="64"/>
    </location>
</feature>
<feature type="strand" evidence="9">
    <location>
        <begin position="67"/>
        <end position="69"/>
    </location>
</feature>
<feature type="strand" evidence="9">
    <location>
        <begin position="82"/>
        <end position="84"/>
    </location>
</feature>
<feature type="helix" evidence="9">
    <location>
        <begin position="86"/>
        <end position="88"/>
    </location>
</feature>
<feature type="strand" evidence="9">
    <location>
        <begin position="95"/>
        <end position="101"/>
    </location>
</feature>
<feature type="turn" evidence="9">
    <location>
        <begin position="106"/>
        <end position="108"/>
    </location>
</feature>
<feature type="strand" evidence="9">
    <location>
        <begin position="114"/>
        <end position="116"/>
    </location>
</feature>
<feature type="strand" evidence="9">
    <location>
        <begin position="119"/>
        <end position="124"/>
    </location>
</feature>
<feature type="strand" evidence="9">
    <location>
        <begin position="127"/>
        <end position="129"/>
    </location>
</feature>
<feature type="strand" evidence="9">
    <location>
        <begin position="132"/>
        <end position="137"/>
    </location>
</feature>
<feature type="helix" evidence="9">
    <location>
        <begin position="139"/>
        <end position="143"/>
    </location>
</feature>
<feature type="strand" evidence="9">
    <location>
        <begin position="144"/>
        <end position="146"/>
    </location>
</feature>
<feature type="strand" evidence="9">
    <location>
        <begin position="148"/>
        <end position="157"/>
    </location>
</feature>
<feature type="strand" evidence="9">
    <location>
        <begin position="163"/>
        <end position="166"/>
    </location>
</feature>
<feature type="strand" evidence="9">
    <location>
        <begin position="171"/>
        <end position="173"/>
    </location>
</feature>
<feature type="helix" evidence="9">
    <location>
        <begin position="181"/>
        <end position="194"/>
    </location>
</feature>
<feature type="helix" evidence="9">
    <location>
        <begin position="201"/>
        <end position="203"/>
    </location>
</feature>
<feature type="strand" evidence="9">
    <location>
        <begin position="222"/>
        <end position="224"/>
    </location>
</feature>
<feature type="helix" evidence="9">
    <location>
        <begin position="225"/>
        <end position="230"/>
    </location>
</feature>
<feature type="strand" evidence="9">
    <location>
        <begin position="241"/>
        <end position="249"/>
    </location>
</feature>
<feature type="strand" evidence="9">
    <location>
        <begin position="270"/>
        <end position="277"/>
    </location>
</feature>
<feature type="strand" evidence="9">
    <location>
        <begin position="282"/>
        <end position="287"/>
    </location>
</feature>
<feature type="turn" evidence="9">
    <location>
        <begin position="288"/>
        <end position="290"/>
    </location>
</feature>
<feature type="strand" evidence="9">
    <location>
        <begin position="297"/>
        <end position="299"/>
    </location>
</feature>
<feature type="strand" evidence="9">
    <location>
        <begin position="353"/>
        <end position="358"/>
    </location>
</feature>
<feature type="helix" evidence="9">
    <location>
        <begin position="359"/>
        <end position="361"/>
    </location>
</feature>
<feature type="strand" evidence="9">
    <location>
        <begin position="366"/>
        <end position="374"/>
    </location>
</feature>
<feature type="turn" evidence="9">
    <location>
        <begin position="378"/>
        <end position="384"/>
    </location>
</feature>
<feature type="strand" evidence="9">
    <location>
        <begin position="387"/>
        <end position="394"/>
    </location>
</feature>
<feature type="helix" evidence="9">
    <location>
        <begin position="406"/>
        <end position="414"/>
    </location>
</feature>
<feature type="strand" evidence="9">
    <location>
        <begin position="420"/>
        <end position="422"/>
    </location>
</feature>
<feature type="strand" evidence="9">
    <location>
        <begin position="428"/>
        <end position="436"/>
    </location>
</feature>
<feature type="strand" evidence="8">
    <location>
        <begin position="452"/>
        <end position="460"/>
    </location>
</feature>
<feature type="helix" evidence="8">
    <location>
        <begin position="461"/>
        <end position="466"/>
    </location>
</feature>
<feature type="helix" evidence="8">
    <location>
        <begin position="473"/>
        <end position="476"/>
    </location>
</feature>
<feature type="helix" evidence="8">
    <location>
        <begin position="481"/>
        <end position="511"/>
    </location>
</feature>
<feature type="strand" evidence="8">
    <location>
        <begin position="523"/>
        <end position="528"/>
    </location>
</feature>
<feature type="helix" evidence="8">
    <location>
        <begin position="539"/>
        <end position="542"/>
    </location>
</feature>
<feature type="helix" evidence="8">
    <location>
        <begin position="543"/>
        <end position="551"/>
    </location>
</feature>
<feature type="strand" evidence="8">
    <location>
        <begin position="558"/>
        <end position="560"/>
    </location>
</feature>
<feature type="strand" evidence="8">
    <location>
        <begin position="564"/>
        <end position="570"/>
    </location>
</feature>
<feature type="strand" evidence="8">
    <location>
        <begin position="576"/>
        <end position="582"/>
    </location>
</feature>
<feature type="strand" evidence="9">
    <location>
        <begin position="585"/>
        <end position="593"/>
    </location>
</feature>
<feature type="strand" evidence="9">
    <location>
        <begin position="595"/>
        <end position="597"/>
    </location>
</feature>
<feature type="strand" evidence="8">
    <location>
        <begin position="602"/>
        <end position="605"/>
    </location>
</feature>
<feature type="strand" evidence="8">
    <location>
        <begin position="608"/>
        <end position="616"/>
    </location>
</feature>
<feature type="strand" evidence="9">
    <location>
        <begin position="618"/>
        <end position="620"/>
    </location>
</feature>
<feature type="strand" evidence="8">
    <location>
        <begin position="622"/>
        <end position="639"/>
    </location>
</feature>
<feature type="strand" evidence="9">
    <location>
        <begin position="641"/>
        <end position="643"/>
    </location>
</feature>
<feature type="strand" evidence="8">
    <location>
        <begin position="645"/>
        <end position="655"/>
    </location>
</feature>
<feature type="strand" evidence="8">
    <location>
        <begin position="657"/>
        <end position="662"/>
    </location>
</feature>
<feature type="strand" evidence="8">
    <location>
        <begin position="668"/>
        <end position="674"/>
    </location>
</feature>
<feature type="strand" evidence="8">
    <location>
        <begin position="680"/>
        <end position="686"/>
    </location>
</feature>
<feature type="strand" evidence="8">
    <location>
        <begin position="689"/>
        <end position="696"/>
    </location>
</feature>
<feature type="strand" evidence="8">
    <location>
        <begin position="699"/>
        <end position="709"/>
    </location>
</feature>
<feature type="helix" evidence="9">
    <location>
        <begin position="711"/>
        <end position="713"/>
    </location>
</feature>
<feature type="strand" evidence="8">
    <location>
        <begin position="714"/>
        <end position="716"/>
    </location>
</feature>
<feature type="helix" evidence="8">
    <location>
        <begin position="721"/>
        <end position="724"/>
    </location>
</feature>
<feature type="strand" evidence="8">
    <location>
        <begin position="730"/>
        <end position="739"/>
    </location>
</feature>
<feature type="strand" evidence="9">
    <location>
        <begin position="742"/>
        <end position="747"/>
    </location>
</feature>
<feature type="turn" evidence="8">
    <location>
        <begin position="768"/>
        <end position="770"/>
    </location>
</feature>
<feature type="strand" evidence="8">
    <location>
        <begin position="775"/>
        <end position="777"/>
    </location>
</feature>
<feature type="turn" evidence="8">
    <location>
        <begin position="793"/>
        <end position="795"/>
    </location>
</feature>
<feature type="strand" evidence="8">
    <location>
        <begin position="808"/>
        <end position="810"/>
    </location>
</feature>
<reference key="1">
    <citation type="journal article" date="2006" name="J. Cell Sci.">
        <title>Radial spoke proteins of Chlamydomonas flagella.</title>
        <authorList>
            <person name="Yang P."/>
            <person name="Diener D.R."/>
            <person name="Yang C."/>
            <person name="Kohno T."/>
            <person name="Pazour G.J."/>
            <person name="Dienes J.M."/>
            <person name="Agrin N.S."/>
            <person name="King S.M."/>
            <person name="Sale W.S."/>
            <person name="Kamiya R."/>
            <person name="Rosenbaum J.L."/>
            <person name="Witman G.B."/>
        </authorList>
    </citation>
    <scope>NUCLEOTIDE SEQUENCE [GENOMIC DNA]</scope>
    <scope>IDENTIFICATION BY MASS SPECTROMETRY</scope>
    <scope>FUNCTION</scope>
    <scope>SUBCELLULAR LOCATION</scope>
</reference>
<reference key="2">
    <citation type="journal article" date="2007" name="Science">
        <title>The Chlamydomonas genome reveals the evolution of key animal and plant functions.</title>
        <authorList>
            <person name="Merchant S.S."/>
            <person name="Prochnik S.E."/>
            <person name="Vallon O."/>
            <person name="Harris E.H."/>
            <person name="Karpowicz S.J."/>
            <person name="Witman G.B."/>
            <person name="Terry A."/>
            <person name="Salamov A."/>
            <person name="Fritz-Laylin L.K."/>
            <person name="Marechal-Drouard L."/>
            <person name="Marshall W.F."/>
            <person name="Qu L.H."/>
            <person name="Nelson D.R."/>
            <person name="Sanderfoot A.A."/>
            <person name="Spalding M.H."/>
            <person name="Kapitonov V.V."/>
            <person name="Ren Q."/>
            <person name="Ferris P."/>
            <person name="Lindquist E."/>
            <person name="Shapiro H."/>
            <person name="Lucas S.M."/>
            <person name="Grimwood J."/>
            <person name="Schmutz J."/>
            <person name="Cardol P."/>
            <person name="Cerutti H."/>
            <person name="Chanfreau G."/>
            <person name="Chen C.L."/>
            <person name="Cognat V."/>
            <person name="Croft M.T."/>
            <person name="Dent R."/>
            <person name="Dutcher S."/>
            <person name="Fernandez E."/>
            <person name="Fukuzawa H."/>
            <person name="Gonzalez-Ballester D."/>
            <person name="Gonzalez-Halphen D."/>
            <person name="Hallmann A."/>
            <person name="Hanikenne M."/>
            <person name="Hippler M."/>
            <person name="Inwood W."/>
            <person name="Jabbari K."/>
            <person name="Kalanon M."/>
            <person name="Kuras R."/>
            <person name="Lefebvre P.A."/>
            <person name="Lemaire S.D."/>
            <person name="Lobanov A.V."/>
            <person name="Lohr M."/>
            <person name="Manuell A."/>
            <person name="Meier I."/>
            <person name="Mets L."/>
            <person name="Mittag M."/>
            <person name="Mittelmeier T."/>
            <person name="Moroney J.V."/>
            <person name="Moseley J."/>
            <person name="Napoli C."/>
            <person name="Nedelcu A.M."/>
            <person name="Niyogi K."/>
            <person name="Novoselov S.V."/>
            <person name="Paulsen I.T."/>
            <person name="Pazour G.J."/>
            <person name="Purton S."/>
            <person name="Ral J.P."/>
            <person name="Riano-Pachon D.M."/>
            <person name="Riekhof W."/>
            <person name="Rymarquis L."/>
            <person name="Schroda M."/>
            <person name="Stern D."/>
            <person name="Umen J."/>
            <person name="Willows R."/>
            <person name="Wilson N."/>
            <person name="Zimmer S.L."/>
            <person name="Allmer J."/>
            <person name="Balk J."/>
            <person name="Bisova K."/>
            <person name="Chen C.J."/>
            <person name="Elias M."/>
            <person name="Gendler K."/>
            <person name="Hauser C."/>
            <person name="Lamb M.R."/>
            <person name="Ledford H."/>
            <person name="Long J.C."/>
            <person name="Minagawa J."/>
            <person name="Page M.D."/>
            <person name="Pan J."/>
            <person name="Pootakham W."/>
            <person name="Roje S."/>
            <person name="Rose A."/>
            <person name="Stahlberg E."/>
            <person name="Terauchi A.M."/>
            <person name="Yang P."/>
            <person name="Ball S."/>
            <person name="Bowler C."/>
            <person name="Dieckmann C.L."/>
            <person name="Gladyshev V.N."/>
            <person name="Green P."/>
            <person name="Jorgensen R."/>
            <person name="Mayfield S."/>
            <person name="Mueller-Roeber B."/>
            <person name="Rajamani S."/>
            <person name="Sayre R.T."/>
            <person name="Brokstein P."/>
            <person name="Dubchak I."/>
            <person name="Goodstein D."/>
            <person name="Hornick L."/>
            <person name="Huang Y.W."/>
            <person name="Jhaveri J."/>
            <person name="Luo Y."/>
            <person name="Martinez D."/>
            <person name="Ngau W.C."/>
            <person name="Otillar B."/>
            <person name="Poliakov A."/>
            <person name="Porter A."/>
            <person name="Szajkowski L."/>
            <person name="Werner G."/>
            <person name="Zhou K."/>
            <person name="Grigoriev I.V."/>
            <person name="Rokhsar D.S."/>
            <person name="Grossman A.R."/>
        </authorList>
    </citation>
    <scope>NUCLEOTIDE SEQUENCE [LARGE SCALE GENOMIC DNA]</scope>
    <source>
        <strain>CC-503</strain>
        <strain>cw92</strain>
    </source>
</reference>
<reference key="3">
    <citation type="journal article" date="2013" name="Biochemistry">
        <title>Methylation of structural components of the axoneme occurs during flagellar disassembly.</title>
        <authorList>
            <person name="Werner-Peterson R."/>
            <person name="Sloboda R.D."/>
        </authorList>
    </citation>
    <scope>METHYLATION AT ARG-243 AND ARG-428</scope>
</reference>
<proteinExistence type="evidence at protein level"/>
<gene>
    <name evidence="5" type="primary">RSP1</name>
    <name evidence="7" type="ORF">CHLREDRAFT_196412</name>
</gene>
<evidence type="ECO:0000255" key="1"/>
<evidence type="ECO:0000256" key="2">
    <source>
        <dbReference type="SAM" id="MobiDB-lite"/>
    </source>
</evidence>
<evidence type="ECO:0000269" key="3">
    <source>
    </source>
</evidence>
<evidence type="ECO:0000269" key="4">
    <source>
    </source>
</evidence>
<evidence type="ECO:0000303" key="5">
    <source>
    </source>
</evidence>
<evidence type="ECO:0000312" key="6">
    <source>
        <dbReference type="EMBL" id="ABC02025.1"/>
    </source>
</evidence>
<evidence type="ECO:0000312" key="7">
    <source>
        <dbReference type="EMBL" id="EDP03379.1"/>
    </source>
</evidence>
<evidence type="ECO:0007829" key="8">
    <source>
        <dbReference type="PDB" id="7JRJ"/>
    </source>
</evidence>
<evidence type="ECO:0007829" key="9">
    <source>
        <dbReference type="PDB" id="7JTK"/>
    </source>
</evidence>
<organism evidence="6">
    <name type="scientific">Chlamydomonas reinhardtii</name>
    <name type="common">Chlamydomonas smithii</name>
    <dbReference type="NCBI Taxonomy" id="3055"/>
    <lineage>
        <taxon>Eukaryota</taxon>
        <taxon>Viridiplantae</taxon>
        <taxon>Chlorophyta</taxon>
        <taxon>core chlorophytes</taxon>
        <taxon>Chlorophyceae</taxon>
        <taxon>CS clade</taxon>
        <taxon>Chlamydomonadales</taxon>
        <taxon>Chlamydomonadaceae</taxon>
        <taxon>Chlamydomonas</taxon>
    </lineage>
</organism>
<keyword id="KW-0002">3D-structure</keyword>
<keyword id="KW-0966">Cell projection</keyword>
<keyword id="KW-0969">Cilium</keyword>
<keyword id="KW-0963">Cytoplasm</keyword>
<keyword id="KW-0206">Cytoskeleton</keyword>
<keyword id="KW-0282">Flagellum</keyword>
<keyword id="KW-0488">Methylation</keyword>
<keyword id="KW-0677">Repeat</keyword>
<accession>Q27YU0</accession>